<proteinExistence type="inferred from homology"/>
<protein>
    <recommendedName>
        <fullName evidence="1">Recombination protein RecR</fullName>
    </recommendedName>
</protein>
<name>RECR_RHIME</name>
<keyword id="KW-0227">DNA damage</keyword>
<keyword id="KW-0233">DNA recombination</keyword>
<keyword id="KW-0234">DNA repair</keyword>
<keyword id="KW-0479">Metal-binding</keyword>
<keyword id="KW-1185">Reference proteome</keyword>
<keyword id="KW-0862">Zinc</keyword>
<keyword id="KW-0863">Zinc-finger</keyword>
<feature type="chain" id="PRO_0000190371" description="Recombination protein RecR">
    <location>
        <begin position="1"/>
        <end position="201"/>
    </location>
</feature>
<feature type="domain" description="Toprim" evidence="1">
    <location>
        <begin position="83"/>
        <end position="178"/>
    </location>
</feature>
<feature type="zinc finger region" description="C4-type" evidence="1">
    <location>
        <begin position="60"/>
        <end position="75"/>
    </location>
</feature>
<reference key="1">
    <citation type="journal article" date="2001" name="Proc. Natl. Acad. Sci. U.S.A.">
        <title>Analysis of the chromosome sequence of the legume symbiont Sinorhizobium meliloti strain 1021.</title>
        <authorList>
            <person name="Capela D."/>
            <person name="Barloy-Hubler F."/>
            <person name="Gouzy J."/>
            <person name="Bothe G."/>
            <person name="Ampe F."/>
            <person name="Batut J."/>
            <person name="Boistard P."/>
            <person name="Becker A."/>
            <person name="Boutry M."/>
            <person name="Cadieu E."/>
            <person name="Dreano S."/>
            <person name="Gloux S."/>
            <person name="Godrie T."/>
            <person name="Goffeau A."/>
            <person name="Kahn D."/>
            <person name="Kiss E."/>
            <person name="Lelaure V."/>
            <person name="Masuy D."/>
            <person name="Pohl T."/>
            <person name="Portetelle D."/>
            <person name="Puehler A."/>
            <person name="Purnelle B."/>
            <person name="Ramsperger U."/>
            <person name="Renard C."/>
            <person name="Thebault P."/>
            <person name="Vandenbol M."/>
            <person name="Weidner S."/>
            <person name="Galibert F."/>
        </authorList>
    </citation>
    <scope>NUCLEOTIDE SEQUENCE [LARGE SCALE GENOMIC DNA]</scope>
    <source>
        <strain>1021</strain>
    </source>
</reference>
<reference key="2">
    <citation type="journal article" date="2001" name="Science">
        <title>The composite genome of the legume symbiont Sinorhizobium meliloti.</title>
        <authorList>
            <person name="Galibert F."/>
            <person name="Finan T.M."/>
            <person name="Long S.R."/>
            <person name="Puehler A."/>
            <person name="Abola P."/>
            <person name="Ampe F."/>
            <person name="Barloy-Hubler F."/>
            <person name="Barnett M.J."/>
            <person name="Becker A."/>
            <person name="Boistard P."/>
            <person name="Bothe G."/>
            <person name="Boutry M."/>
            <person name="Bowser L."/>
            <person name="Buhrmester J."/>
            <person name="Cadieu E."/>
            <person name="Capela D."/>
            <person name="Chain P."/>
            <person name="Cowie A."/>
            <person name="Davis R.W."/>
            <person name="Dreano S."/>
            <person name="Federspiel N.A."/>
            <person name="Fisher R.F."/>
            <person name="Gloux S."/>
            <person name="Godrie T."/>
            <person name="Goffeau A."/>
            <person name="Golding B."/>
            <person name="Gouzy J."/>
            <person name="Gurjal M."/>
            <person name="Hernandez-Lucas I."/>
            <person name="Hong A."/>
            <person name="Huizar L."/>
            <person name="Hyman R.W."/>
            <person name="Jones T."/>
            <person name="Kahn D."/>
            <person name="Kahn M.L."/>
            <person name="Kalman S."/>
            <person name="Keating D.H."/>
            <person name="Kiss E."/>
            <person name="Komp C."/>
            <person name="Lelaure V."/>
            <person name="Masuy D."/>
            <person name="Palm C."/>
            <person name="Peck M.C."/>
            <person name="Pohl T.M."/>
            <person name="Portetelle D."/>
            <person name="Purnelle B."/>
            <person name="Ramsperger U."/>
            <person name="Surzycki R."/>
            <person name="Thebault P."/>
            <person name="Vandenbol M."/>
            <person name="Vorhoelter F.J."/>
            <person name="Weidner S."/>
            <person name="Wells D.H."/>
            <person name="Wong K."/>
            <person name="Yeh K.-C."/>
            <person name="Batut J."/>
        </authorList>
    </citation>
    <scope>NUCLEOTIDE SEQUENCE [LARGE SCALE GENOMIC DNA]</scope>
    <source>
        <strain>1021</strain>
    </source>
</reference>
<gene>
    <name evidence="1" type="primary">recR</name>
    <name type="ordered locus">R00233</name>
    <name type="ORF">SMc02908</name>
</gene>
<evidence type="ECO:0000255" key="1">
    <source>
        <dbReference type="HAMAP-Rule" id="MF_00017"/>
    </source>
</evidence>
<dbReference type="EMBL" id="AL591688">
    <property type="protein sequence ID" value="CAC41670.1"/>
    <property type="molecule type" value="Genomic_DNA"/>
</dbReference>
<dbReference type="RefSeq" id="NP_384339.1">
    <property type="nucleotide sequence ID" value="NC_003047.1"/>
</dbReference>
<dbReference type="RefSeq" id="WP_003533410.1">
    <property type="nucleotide sequence ID" value="NC_003047.1"/>
</dbReference>
<dbReference type="SMR" id="Q92SW9"/>
<dbReference type="EnsemblBacteria" id="CAC41670">
    <property type="protein sequence ID" value="CAC41670"/>
    <property type="gene ID" value="SMc02908"/>
</dbReference>
<dbReference type="KEGG" id="sme:SMc02908"/>
<dbReference type="PATRIC" id="fig|266834.11.peg.1599"/>
<dbReference type="eggNOG" id="COG0353">
    <property type="taxonomic scope" value="Bacteria"/>
</dbReference>
<dbReference type="HOGENOM" id="CLU_060739_1_1_5"/>
<dbReference type="OrthoDB" id="9802672at2"/>
<dbReference type="Proteomes" id="UP000001976">
    <property type="component" value="Chromosome"/>
</dbReference>
<dbReference type="GO" id="GO:0003677">
    <property type="term" value="F:DNA binding"/>
    <property type="evidence" value="ECO:0007669"/>
    <property type="project" value="UniProtKB-UniRule"/>
</dbReference>
<dbReference type="GO" id="GO:0008270">
    <property type="term" value="F:zinc ion binding"/>
    <property type="evidence" value="ECO:0007669"/>
    <property type="project" value="UniProtKB-KW"/>
</dbReference>
<dbReference type="GO" id="GO:0006310">
    <property type="term" value="P:DNA recombination"/>
    <property type="evidence" value="ECO:0007669"/>
    <property type="project" value="UniProtKB-UniRule"/>
</dbReference>
<dbReference type="GO" id="GO:0006281">
    <property type="term" value="P:DNA repair"/>
    <property type="evidence" value="ECO:0007669"/>
    <property type="project" value="UniProtKB-UniRule"/>
</dbReference>
<dbReference type="CDD" id="cd01025">
    <property type="entry name" value="TOPRIM_recR"/>
    <property type="match status" value="1"/>
</dbReference>
<dbReference type="Gene3D" id="3.40.1360.10">
    <property type="match status" value="1"/>
</dbReference>
<dbReference type="Gene3D" id="6.10.250.240">
    <property type="match status" value="1"/>
</dbReference>
<dbReference type="Gene3D" id="1.10.8.420">
    <property type="entry name" value="RecR Domain 1"/>
    <property type="match status" value="1"/>
</dbReference>
<dbReference type="HAMAP" id="MF_00017">
    <property type="entry name" value="RecR"/>
    <property type="match status" value="1"/>
</dbReference>
<dbReference type="InterPro" id="IPR000093">
    <property type="entry name" value="DNA_Rcmb_RecR"/>
</dbReference>
<dbReference type="InterPro" id="IPR023627">
    <property type="entry name" value="Rcmb_RecR"/>
</dbReference>
<dbReference type="InterPro" id="IPR015967">
    <property type="entry name" value="Rcmb_RecR_Znf"/>
</dbReference>
<dbReference type="InterPro" id="IPR006171">
    <property type="entry name" value="TOPRIM_dom"/>
</dbReference>
<dbReference type="InterPro" id="IPR034137">
    <property type="entry name" value="TOPRIM_RecR"/>
</dbReference>
<dbReference type="NCBIfam" id="TIGR00615">
    <property type="entry name" value="recR"/>
    <property type="match status" value="1"/>
</dbReference>
<dbReference type="PANTHER" id="PTHR30446">
    <property type="entry name" value="RECOMBINATION PROTEIN RECR"/>
    <property type="match status" value="1"/>
</dbReference>
<dbReference type="PANTHER" id="PTHR30446:SF0">
    <property type="entry name" value="RECOMBINATION PROTEIN RECR"/>
    <property type="match status" value="1"/>
</dbReference>
<dbReference type="Pfam" id="PF21175">
    <property type="entry name" value="RecR_C"/>
    <property type="match status" value="1"/>
</dbReference>
<dbReference type="Pfam" id="PF21176">
    <property type="entry name" value="RecR_HhH"/>
    <property type="match status" value="1"/>
</dbReference>
<dbReference type="Pfam" id="PF13662">
    <property type="entry name" value="Toprim_4"/>
    <property type="match status" value="1"/>
</dbReference>
<dbReference type="SMART" id="SM00493">
    <property type="entry name" value="TOPRIM"/>
    <property type="match status" value="1"/>
</dbReference>
<dbReference type="SUPFAM" id="SSF111304">
    <property type="entry name" value="Recombination protein RecR"/>
    <property type="match status" value="1"/>
</dbReference>
<dbReference type="PROSITE" id="PS01300">
    <property type="entry name" value="RECR"/>
    <property type="match status" value="1"/>
</dbReference>
<dbReference type="PROSITE" id="PS50880">
    <property type="entry name" value="TOPRIM"/>
    <property type="match status" value="1"/>
</dbReference>
<sequence length="201" mass="21500">MAKRVTGPEIEKLIQLLAKVPGLGPRSARRAALHLVKKKEQLLGPLAEAMGEAHRKVKICSCCGNVDTIDPCTVCTDERRDQAVIIVVEDVADLWALERAGAMNAAYHVLGGTLSPLDGIGPEDLNIRGLIDRVAKGGVRELIIAVNATVEGQTTAHYITDQLEGMEVRITRLAHGVPVGGELDYLDEGTLAAALRARTVI</sequence>
<organism>
    <name type="scientific">Rhizobium meliloti (strain 1021)</name>
    <name type="common">Ensifer meliloti</name>
    <name type="synonym">Sinorhizobium meliloti</name>
    <dbReference type="NCBI Taxonomy" id="266834"/>
    <lineage>
        <taxon>Bacteria</taxon>
        <taxon>Pseudomonadati</taxon>
        <taxon>Pseudomonadota</taxon>
        <taxon>Alphaproteobacteria</taxon>
        <taxon>Hyphomicrobiales</taxon>
        <taxon>Rhizobiaceae</taxon>
        <taxon>Sinorhizobium/Ensifer group</taxon>
        <taxon>Sinorhizobium</taxon>
    </lineage>
</organism>
<accession>Q92SW9</accession>
<comment type="function">
    <text evidence="1">May play a role in DNA repair. It seems to be involved in an RecBC-independent recombinational process of DNA repair. It may act with RecF and RecO.</text>
</comment>
<comment type="similarity">
    <text evidence="1">Belongs to the RecR family.</text>
</comment>